<name>N2C1B_XENLA</name>
<keyword id="KW-0010">Activator</keyword>
<keyword id="KW-0238">DNA-binding</keyword>
<keyword id="KW-0479">Metal-binding</keyword>
<keyword id="KW-0539">Nucleus</keyword>
<keyword id="KW-0675">Receptor</keyword>
<keyword id="KW-1185">Reference proteome</keyword>
<keyword id="KW-0678">Repressor</keyword>
<keyword id="KW-0804">Transcription</keyword>
<keyword id="KW-0805">Transcription regulation</keyword>
<keyword id="KW-0862">Zinc</keyword>
<keyword id="KW-0863">Zinc-finger</keyword>
<accession>Q66J63</accession>
<feature type="chain" id="PRO_0000287913" description="Nuclear receptor subfamily 2 group C member 1-B">
    <location>
        <begin position="1"/>
        <end position="637"/>
    </location>
</feature>
<feature type="domain" description="NR LBD" evidence="5">
    <location>
        <begin position="383"/>
        <end position="624"/>
    </location>
</feature>
<feature type="DNA-binding region" description="Nuclear receptor" evidence="4">
    <location>
        <begin position="149"/>
        <end position="224"/>
    </location>
</feature>
<feature type="zinc finger region" description="NR C4-type" evidence="4">
    <location>
        <begin position="152"/>
        <end position="172"/>
    </location>
</feature>
<feature type="zinc finger region" description="NR C4-type" evidence="4">
    <location>
        <begin position="188"/>
        <end position="207"/>
    </location>
</feature>
<gene>
    <name type="primary">nr2c1-b</name>
    <name evidence="2" type="synonym">dor2</name>
</gene>
<protein>
    <recommendedName>
        <fullName>Nuclear receptor subfamily 2 group C member 1-B</fullName>
    </recommendedName>
    <alternativeName>
        <fullName>Developmental orphan receptor 2-B</fullName>
        <shortName>DOR2-B</shortName>
        <shortName>xDOR2-B</shortName>
    </alternativeName>
    <alternativeName>
        <fullName>Orphan nuclear receptor TR2-B</fullName>
    </alternativeName>
    <alternativeName>
        <fullName>Testicular receptor 2-B</fullName>
    </alternativeName>
</protein>
<proteinExistence type="evidence at transcript level"/>
<organism>
    <name type="scientific">Xenopus laevis</name>
    <name type="common">African clawed frog</name>
    <dbReference type="NCBI Taxonomy" id="8355"/>
    <lineage>
        <taxon>Eukaryota</taxon>
        <taxon>Metazoa</taxon>
        <taxon>Chordata</taxon>
        <taxon>Craniata</taxon>
        <taxon>Vertebrata</taxon>
        <taxon>Euteleostomi</taxon>
        <taxon>Amphibia</taxon>
        <taxon>Batrachia</taxon>
        <taxon>Anura</taxon>
        <taxon>Pipoidea</taxon>
        <taxon>Pipidae</taxon>
        <taxon>Xenopodinae</taxon>
        <taxon>Xenopus</taxon>
        <taxon>Xenopus</taxon>
    </lineage>
</organism>
<comment type="function">
    <text evidence="1">Orphan nuclear receptor. Binds the IR7 element in the promoter of its own gene in an autoregulatory negative feedback mechanism. Primarily repressor of a broad range of genes. Binds to hormone response elements (HREs) consisting of two 5'-AGGTCA-3' half site direct repeat consensus sequences (By similarity).</text>
</comment>
<comment type="subcellular location">
    <subcellularLocation>
        <location evidence="4">Nucleus</location>
    </subcellularLocation>
</comment>
<comment type="similarity">
    <text evidence="3">Belongs to the nuclear hormone receptor family. NR2 subfamily.</text>
</comment>
<sequence>MASIEEIAHQIIEQQMGEISRSHTEVSQTALMDGTTQRIQLVPSESSVSVPQRIQIVTDPQTGQKIQIVTALDQSGTNKQFIFTNNDGSLPSKVILARQDSSQGKVFLTTPDAAGVNQLFFSTPDVPAQHIQILSDTQSLDQNLNKQFVELCVVCGDKASGRHYGAVTCEGCKGFFKRSIRKNLIYTCRGSKDCVINKHYRNRCQYCRLQRCISLGMKQDSVQCERKPIEVSREKSSNCAASTEKIYIRKDLRSPLAATTTFVTESKTSRTTSLLDSSMLVNIQQSGVKNESILLTPNKVEACQGDLSTLANVVTSLANLNKSKDLPQTNTEFSIIESLSNGDSSLSDLAQDDQSNSEVTRAFDTLAKALNQSENSTQGSSECVGSGSNLLPDVNVEIEGPLLNDVHIAFRLTMPSPMPEYLNVHYICESASRLLFLSMHWARSIPSFLSLGQENSISLVKACWNELFSLGLAQCCQVMNVETILAAFVNHLHNSMQHDKLSSDKVKLVMDHIFKLQEFCNSMVKRCVDGYEYAYLKAIALFSPDHPGLENVSHIEKLQEKAYMEFQDYVTKTYPEDTYRLSRLLLRLPALRLLNAAITEELFFAGLIGNVQIDSIIPYILRMETSDYNSQIIGLTA</sequence>
<evidence type="ECO:0000250" key="1"/>
<evidence type="ECO:0000250" key="2">
    <source>
        <dbReference type="UniProtKB" id="Q6GN21"/>
    </source>
</evidence>
<evidence type="ECO:0000255" key="3"/>
<evidence type="ECO:0000255" key="4">
    <source>
        <dbReference type="PROSITE-ProRule" id="PRU00407"/>
    </source>
</evidence>
<evidence type="ECO:0000255" key="5">
    <source>
        <dbReference type="PROSITE-ProRule" id="PRU01189"/>
    </source>
</evidence>
<evidence type="ECO:0000312" key="6">
    <source>
        <dbReference type="EMBL" id="AAH81046.1"/>
    </source>
</evidence>
<reference evidence="6" key="1">
    <citation type="submission" date="2004-08" db="EMBL/GenBank/DDBJ databases">
        <authorList>
            <consortium name="NIH - Xenopus Gene Collection (XGC) project"/>
        </authorList>
    </citation>
    <scope>NUCLEOTIDE SEQUENCE [LARGE SCALE MRNA]</scope>
    <source>
        <tissue evidence="6">Kidney</tissue>
    </source>
</reference>
<dbReference type="EMBL" id="BC081046">
    <property type="protein sequence ID" value="AAH81046.1"/>
    <property type="molecule type" value="mRNA"/>
</dbReference>
<dbReference type="RefSeq" id="NP_001087654.1">
    <property type="nucleotide sequence ID" value="NM_001094185.1"/>
</dbReference>
<dbReference type="DNASU" id="447478"/>
<dbReference type="GeneID" id="447478"/>
<dbReference type="KEGG" id="xla:447478"/>
<dbReference type="AGR" id="Xenbase:XB-GENE-865413"/>
<dbReference type="CTD" id="447478"/>
<dbReference type="Xenbase" id="XB-GENE-865413">
    <property type="gene designation" value="nr2c1.L"/>
</dbReference>
<dbReference type="OrthoDB" id="10024684at2759"/>
<dbReference type="Proteomes" id="UP000186698">
    <property type="component" value="Chromosome 3L"/>
</dbReference>
<dbReference type="Bgee" id="447478">
    <property type="expression patterns" value="Expressed in egg cell and 19 other cell types or tissues"/>
</dbReference>
<dbReference type="GO" id="GO:0005634">
    <property type="term" value="C:nucleus"/>
    <property type="evidence" value="ECO:0000250"/>
    <property type="project" value="UniProtKB"/>
</dbReference>
<dbReference type="GO" id="GO:0003677">
    <property type="term" value="F:DNA binding"/>
    <property type="evidence" value="ECO:0000250"/>
    <property type="project" value="UniProtKB"/>
</dbReference>
<dbReference type="GO" id="GO:0004879">
    <property type="term" value="F:nuclear receptor activity"/>
    <property type="evidence" value="ECO:0000318"/>
    <property type="project" value="GO_Central"/>
</dbReference>
<dbReference type="GO" id="GO:0000978">
    <property type="term" value="F:RNA polymerase II cis-regulatory region sequence-specific DNA binding"/>
    <property type="evidence" value="ECO:0000318"/>
    <property type="project" value="GO_Central"/>
</dbReference>
<dbReference type="GO" id="GO:0008270">
    <property type="term" value="F:zinc ion binding"/>
    <property type="evidence" value="ECO:0007669"/>
    <property type="project" value="UniProtKB-KW"/>
</dbReference>
<dbReference type="GO" id="GO:0030154">
    <property type="term" value="P:cell differentiation"/>
    <property type="evidence" value="ECO:0000318"/>
    <property type="project" value="GO_Central"/>
</dbReference>
<dbReference type="GO" id="GO:0045892">
    <property type="term" value="P:negative regulation of DNA-templated transcription"/>
    <property type="evidence" value="ECO:0000250"/>
    <property type="project" value="UniProtKB"/>
</dbReference>
<dbReference type="GO" id="GO:0000122">
    <property type="term" value="P:negative regulation of transcription by RNA polymerase II"/>
    <property type="evidence" value="ECO:0000250"/>
    <property type="project" value="UniProtKB"/>
</dbReference>
<dbReference type="GO" id="GO:0006357">
    <property type="term" value="P:regulation of transcription by RNA polymerase II"/>
    <property type="evidence" value="ECO:0000318"/>
    <property type="project" value="GO_Central"/>
</dbReference>
<dbReference type="CDD" id="cd06967">
    <property type="entry name" value="NR_DBD_TR2_like"/>
    <property type="match status" value="1"/>
</dbReference>
<dbReference type="CDD" id="cd06952">
    <property type="entry name" value="NR_LBD_TR2_like"/>
    <property type="match status" value="1"/>
</dbReference>
<dbReference type="FunFam" id="1.10.565.10:FF:000012">
    <property type="entry name" value="Nuclear receptor subfamily 2 group C member 1"/>
    <property type="match status" value="1"/>
</dbReference>
<dbReference type="FunFam" id="3.30.50.10:FF:000015">
    <property type="entry name" value="Nuclear receptor subfamily 2, group C, member 1"/>
    <property type="match status" value="1"/>
</dbReference>
<dbReference type="Gene3D" id="3.30.50.10">
    <property type="entry name" value="Erythroid Transcription Factor GATA-1, subunit A"/>
    <property type="match status" value="1"/>
</dbReference>
<dbReference type="Gene3D" id="1.10.565.10">
    <property type="entry name" value="Retinoid X Receptor"/>
    <property type="match status" value="1"/>
</dbReference>
<dbReference type="InterPro" id="IPR035500">
    <property type="entry name" value="NHR-like_dom_sf"/>
</dbReference>
<dbReference type="InterPro" id="IPR048245">
    <property type="entry name" value="NR2C1/2-like_DBD"/>
</dbReference>
<dbReference type="InterPro" id="IPR048246">
    <property type="entry name" value="NR2C1/2-like_LBD"/>
</dbReference>
<dbReference type="InterPro" id="IPR000536">
    <property type="entry name" value="Nucl_hrmn_rcpt_lig-bd"/>
</dbReference>
<dbReference type="InterPro" id="IPR050274">
    <property type="entry name" value="Nuclear_hormone_rcpt_NR2"/>
</dbReference>
<dbReference type="InterPro" id="IPR001723">
    <property type="entry name" value="Nuclear_hrmn_rcpt"/>
</dbReference>
<dbReference type="InterPro" id="IPR001628">
    <property type="entry name" value="Znf_hrmn_rcpt"/>
</dbReference>
<dbReference type="InterPro" id="IPR013088">
    <property type="entry name" value="Znf_NHR/GATA"/>
</dbReference>
<dbReference type="PANTHER" id="PTHR24083">
    <property type="entry name" value="NUCLEAR HORMONE RECEPTOR"/>
    <property type="match status" value="1"/>
</dbReference>
<dbReference type="Pfam" id="PF00104">
    <property type="entry name" value="Hormone_recep"/>
    <property type="match status" value="1"/>
</dbReference>
<dbReference type="Pfam" id="PF00105">
    <property type="entry name" value="zf-C4"/>
    <property type="match status" value="1"/>
</dbReference>
<dbReference type="PRINTS" id="PR01282">
    <property type="entry name" value="COUPTNFACTOR"/>
</dbReference>
<dbReference type="PRINTS" id="PR00398">
    <property type="entry name" value="STRDHORMONER"/>
</dbReference>
<dbReference type="PRINTS" id="PR00047">
    <property type="entry name" value="STROIDFINGER"/>
</dbReference>
<dbReference type="SMART" id="SM00430">
    <property type="entry name" value="HOLI"/>
    <property type="match status" value="1"/>
</dbReference>
<dbReference type="SMART" id="SM00399">
    <property type="entry name" value="ZnF_C4"/>
    <property type="match status" value="1"/>
</dbReference>
<dbReference type="SUPFAM" id="SSF57716">
    <property type="entry name" value="Glucocorticoid receptor-like (DNA-binding domain)"/>
    <property type="match status" value="1"/>
</dbReference>
<dbReference type="SUPFAM" id="SSF48508">
    <property type="entry name" value="Nuclear receptor ligand-binding domain"/>
    <property type="match status" value="1"/>
</dbReference>
<dbReference type="PROSITE" id="PS51843">
    <property type="entry name" value="NR_LBD"/>
    <property type="match status" value="1"/>
</dbReference>
<dbReference type="PROSITE" id="PS00031">
    <property type="entry name" value="NUCLEAR_REC_DBD_1"/>
    <property type="match status" value="1"/>
</dbReference>
<dbReference type="PROSITE" id="PS51030">
    <property type="entry name" value="NUCLEAR_REC_DBD_2"/>
    <property type="match status" value="1"/>
</dbReference>